<accession>Q7V993</accession>
<gene>
    <name evidence="1" type="primary">clpX</name>
    <name type="ordered locus">PMT_0061</name>
</gene>
<proteinExistence type="inferred from homology"/>
<evidence type="ECO:0000255" key="1">
    <source>
        <dbReference type="HAMAP-Rule" id="MF_00175"/>
    </source>
</evidence>
<evidence type="ECO:0000255" key="2">
    <source>
        <dbReference type="PROSITE-ProRule" id="PRU01250"/>
    </source>
</evidence>
<evidence type="ECO:0000256" key="3">
    <source>
        <dbReference type="SAM" id="MobiDB-lite"/>
    </source>
</evidence>
<keyword id="KW-0067">ATP-binding</keyword>
<keyword id="KW-0143">Chaperone</keyword>
<keyword id="KW-0479">Metal-binding</keyword>
<keyword id="KW-0547">Nucleotide-binding</keyword>
<keyword id="KW-1185">Reference proteome</keyword>
<keyword id="KW-0862">Zinc</keyword>
<protein>
    <recommendedName>
        <fullName evidence="1">ATP-dependent Clp protease ATP-binding subunit ClpX</fullName>
    </recommendedName>
</protein>
<sequence>MAKFDAHLKCSFCGKSQDQVRKLIAGPGVYICDECIDLCTEILDEELVDSQGNPRHSSESNRKSATASHKSGKPAPTLATIPKPQQIKSFLDKQVVGQEAAKKVLSVAVYNHYKRLAWQGDGQGETDLSATRLHKSNILLIGPTGCGKTLLAQTLAELLDVPFAVADATTLTEAGYVGEDVENILLRLLQKADMDVEHAQRGIIYVDEIDKIARKSENPSITRDVSGEGVQQALLKMLEGTVANVPPQGGRKHPYQDCIQIDTSQILFICGGAFIGLEDVVQKRLGRNAIGFMPSDGRGRSRANRDLQASQVLHHLEADDLVRYGLIPEFIGRIPVSAVLEPLDSQALESILTEPRDALVKQFSTLLSMDNVQLEFESDAVEAIAQEAHRRKTGARALRGIIEELMLDLMYDLPSKKNVKKFTVTRTMVDEHTGGKVLPLPANDERSHQESA</sequence>
<organism>
    <name type="scientific">Prochlorococcus marinus (strain MIT 9313)</name>
    <dbReference type="NCBI Taxonomy" id="74547"/>
    <lineage>
        <taxon>Bacteria</taxon>
        <taxon>Bacillati</taxon>
        <taxon>Cyanobacteriota</taxon>
        <taxon>Cyanophyceae</taxon>
        <taxon>Synechococcales</taxon>
        <taxon>Prochlorococcaceae</taxon>
        <taxon>Prochlorococcus</taxon>
    </lineage>
</organism>
<name>CLPX_PROMM</name>
<feature type="chain" id="PRO_0000160402" description="ATP-dependent Clp protease ATP-binding subunit ClpX">
    <location>
        <begin position="1"/>
        <end position="452"/>
    </location>
</feature>
<feature type="domain" description="ClpX-type ZB" evidence="2">
    <location>
        <begin position="1"/>
        <end position="51"/>
    </location>
</feature>
<feature type="region of interest" description="Disordered" evidence="3">
    <location>
        <begin position="50"/>
        <end position="79"/>
    </location>
</feature>
<feature type="region of interest" description="Disordered" evidence="3">
    <location>
        <begin position="433"/>
        <end position="452"/>
    </location>
</feature>
<feature type="compositionally biased region" description="Basic and acidic residues" evidence="3">
    <location>
        <begin position="443"/>
        <end position="452"/>
    </location>
</feature>
<feature type="binding site" evidence="2">
    <location>
        <position position="10"/>
    </location>
    <ligand>
        <name>Zn(2+)</name>
        <dbReference type="ChEBI" id="CHEBI:29105"/>
    </ligand>
</feature>
<feature type="binding site" evidence="2">
    <location>
        <position position="13"/>
    </location>
    <ligand>
        <name>Zn(2+)</name>
        <dbReference type="ChEBI" id="CHEBI:29105"/>
    </ligand>
</feature>
<feature type="binding site" evidence="2">
    <location>
        <position position="32"/>
    </location>
    <ligand>
        <name>Zn(2+)</name>
        <dbReference type="ChEBI" id="CHEBI:29105"/>
    </ligand>
</feature>
<feature type="binding site" evidence="2">
    <location>
        <position position="35"/>
    </location>
    <ligand>
        <name>Zn(2+)</name>
        <dbReference type="ChEBI" id="CHEBI:29105"/>
    </ligand>
</feature>
<feature type="binding site" evidence="1">
    <location>
        <begin position="143"/>
        <end position="150"/>
    </location>
    <ligand>
        <name>ATP</name>
        <dbReference type="ChEBI" id="CHEBI:30616"/>
    </ligand>
</feature>
<reference key="1">
    <citation type="journal article" date="2003" name="Nature">
        <title>Genome divergence in two Prochlorococcus ecotypes reflects oceanic niche differentiation.</title>
        <authorList>
            <person name="Rocap G."/>
            <person name="Larimer F.W."/>
            <person name="Lamerdin J.E."/>
            <person name="Malfatti S."/>
            <person name="Chain P."/>
            <person name="Ahlgren N.A."/>
            <person name="Arellano A."/>
            <person name="Coleman M."/>
            <person name="Hauser L."/>
            <person name="Hess W.R."/>
            <person name="Johnson Z.I."/>
            <person name="Land M.L."/>
            <person name="Lindell D."/>
            <person name="Post A.F."/>
            <person name="Regala W."/>
            <person name="Shah M."/>
            <person name="Shaw S.L."/>
            <person name="Steglich C."/>
            <person name="Sullivan M.B."/>
            <person name="Ting C.S."/>
            <person name="Tolonen A."/>
            <person name="Webb E.A."/>
            <person name="Zinser E.R."/>
            <person name="Chisholm S.W."/>
        </authorList>
    </citation>
    <scope>NUCLEOTIDE SEQUENCE [LARGE SCALE GENOMIC DNA]</scope>
    <source>
        <strain>MIT 9313</strain>
    </source>
</reference>
<comment type="function">
    <text evidence="1">ATP-dependent specificity component of the Clp protease. It directs the protease to specific substrates. Can perform chaperone functions in the absence of ClpP.</text>
</comment>
<comment type="subunit">
    <text evidence="1">Component of the ClpX-ClpP complex. Forms a hexameric ring that, in the presence of ATP, binds to fourteen ClpP subunits assembled into a disk-like structure with a central cavity, resembling the structure of eukaryotic proteasomes.</text>
</comment>
<comment type="similarity">
    <text evidence="1">Belongs to the ClpX chaperone family.</text>
</comment>
<dbReference type="EMBL" id="BX548175">
    <property type="protein sequence ID" value="CAE20236.1"/>
    <property type="molecule type" value="Genomic_DNA"/>
</dbReference>
<dbReference type="RefSeq" id="WP_011129440.1">
    <property type="nucleotide sequence ID" value="NC_005071.1"/>
</dbReference>
<dbReference type="SMR" id="Q7V993"/>
<dbReference type="KEGG" id="pmt:PMT_0061"/>
<dbReference type="eggNOG" id="COG1219">
    <property type="taxonomic scope" value="Bacteria"/>
</dbReference>
<dbReference type="HOGENOM" id="CLU_014218_8_2_3"/>
<dbReference type="OrthoDB" id="9804062at2"/>
<dbReference type="Proteomes" id="UP000001423">
    <property type="component" value="Chromosome"/>
</dbReference>
<dbReference type="GO" id="GO:0009376">
    <property type="term" value="C:HslUV protease complex"/>
    <property type="evidence" value="ECO:0007669"/>
    <property type="project" value="TreeGrafter"/>
</dbReference>
<dbReference type="GO" id="GO:0005524">
    <property type="term" value="F:ATP binding"/>
    <property type="evidence" value="ECO:0007669"/>
    <property type="project" value="UniProtKB-UniRule"/>
</dbReference>
<dbReference type="GO" id="GO:0016887">
    <property type="term" value="F:ATP hydrolysis activity"/>
    <property type="evidence" value="ECO:0007669"/>
    <property type="project" value="InterPro"/>
</dbReference>
<dbReference type="GO" id="GO:0140662">
    <property type="term" value="F:ATP-dependent protein folding chaperone"/>
    <property type="evidence" value="ECO:0007669"/>
    <property type="project" value="InterPro"/>
</dbReference>
<dbReference type="GO" id="GO:0046983">
    <property type="term" value="F:protein dimerization activity"/>
    <property type="evidence" value="ECO:0007669"/>
    <property type="project" value="InterPro"/>
</dbReference>
<dbReference type="GO" id="GO:0051082">
    <property type="term" value="F:unfolded protein binding"/>
    <property type="evidence" value="ECO:0007669"/>
    <property type="project" value="UniProtKB-UniRule"/>
</dbReference>
<dbReference type="GO" id="GO:0008270">
    <property type="term" value="F:zinc ion binding"/>
    <property type="evidence" value="ECO:0007669"/>
    <property type="project" value="InterPro"/>
</dbReference>
<dbReference type="GO" id="GO:0051301">
    <property type="term" value="P:cell division"/>
    <property type="evidence" value="ECO:0007669"/>
    <property type="project" value="TreeGrafter"/>
</dbReference>
<dbReference type="GO" id="GO:0051603">
    <property type="term" value="P:proteolysis involved in protein catabolic process"/>
    <property type="evidence" value="ECO:0007669"/>
    <property type="project" value="TreeGrafter"/>
</dbReference>
<dbReference type="CDD" id="cd19497">
    <property type="entry name" value="RecA-like_ClpX"/>
    <property type="match status" value="1"/>
</dbReference>
<dbReference type="FunFam" id="1.10.8.60:FF:000002">
    <property type="entry name" value="ATP-dependent Clp protease ATP-binding subunit ClpX"/>
    <property type="match status" value="1"/>
</dbReference>
<dbReference type="FunFam" id="3.40.50.300:FF:000005">
    <property type="entry name" value="ATP-dependent Clp protease ATP-binding subunit ClpX"/>
    <property type="match status" value="1"/>
</dbReference>
<dbReference type="Gene3D" id="1.10.8.60">
    <property type="match status" value="1"/>
</dbReference>
<dbReference type="Gene3D" id="6.20.220.10">
    <property type="entry name" value="ClpX chaperone, C4-type zinc finger domain"/>
    <property type="match status" value="1"/>
</dbReference>
<dbReference type="Gene3D" id="3.40.50.300">
    <property type="entry name" value="P-loop containing nucleotide triphosphate hydrolases"/>
    <property type="match status" value="1"/>
</dbReference>
<dbReference type="HAMAP" id="MF_00175">
    <property type="entry name" value="ClpX"/>
    <property type="match status" value="1"/>
</dbReference>
<dbReference type="InterPro" id="IPR003593">
    <property type="entry name" value="AAA+_ATPase"/>
</dbReference>
<dbReference type="InterPro" id="IPR050052">
    <property type="entry name" value="ATP-dep_Clp_protease_ClpX"/>
</dbReference>
<dbReference type="InterPro" id="IPR003959">
    <property type="entry name" value="ATPase_AAA_core"/>
</dbReference>
<dbReference type="InterPro" id="IPR019489">
    <property type="entry name" value="Clp_ATPase_C"/>
</dbReference>
<dbReference type="InterPro" id="IPR004487">
    <property type="entry name" value="Clp_protease_ATP-bd_su_ClpX"/>
</dbReference>
<dbReference type="InterPro" id="IPR046425">
    <property type="entry name" value="ClpX_bact"/>
</dbReference>
<dbReference type="InterPro" id="IPR027417">
    <property type="entry name" value="P-loop_NTPase"/>
</dbReference>
<dbReference type="InterPro" id="IPR010603">
    <property type="entry name" value="Znf_CppX_C4"/>
</dbReference>
<dbReference type="InterPro" id="IPR038366">
    <property type="entry name" value="Znf_CppX_C4_sf"/>
</dbReference>
<dbReference type="NCBIfam" id="TIGR00382">
    <property type="entry name" value="clpX"/>
    <property type="match status" value="1"/>
</dbReference>
<dbReference type="NCBIfam" id="NF003745">
    <property type="entry name" value="PRK05342.1"/>
    <property type="match status" value="1"/>
</dbReference>
<dbReference type="PANTHER" id="PTHR48102:SF7">
    <property type="entry name" value="ATP-DEPENDENT CLP PROTEASE ATP-BINDING SUBUNIT CLPX-LIKE, MITOCHONDRIAL"/>
    <property type="match status" value="1"/>
</dbReference>
<dbReference type="PANTHER" id="PTHR48102">
    <property type="entry name" value="ATP-DEPENDENT CLP PROTEASE ATP-BINDING SUBUNIT CLPX-LIKE, MITOCHONDRIAL-RELATED"/>
    <property type="match status" value="1"/>
</dbReference>
<dbReference type="Pfam" id="PF07724">
    <property type="entry name" value="AAA_2"/>
    <property type="match status" value="1"/>
</dbReference>
<dbReference type="Pfam" id="PF10431">
    <property type="entry name" value="ClpB_D2-small"/>
    <property type="match status" value="1"/>
</dbReference>
<dbReference type="Pfam" id="PF06689">
    <property type="entry name" value="zf-C4_ClpX"/>
    <property type="match status" value="1"/>
</dbReference>
<dbReference type="SMART" id="SM00382">
    <property type="entry name" value="AAA"/>
    <property type="match status" value="1"/>
</dbReference>
<dbReference type="SMART" id="SM01086">
    <property type="entry name" value="ClpB_D2-small"/>
    <property type="match status" value="1"/>
</dbReference>
<dbReference type="SMART" id="SM00994">
    <property type="entry name" value="zf-C4_ClpX"/>
    <property type="match status" value="1"/>
</dbReference>
<dbReference type="SUPFAM" id="SSF57716">
    <property type="entry name" value="Glucocorticoid receptor-like (DNA-binding domain)"/>
    <property type="match status" value="1"/>
</dbReference>
<dbReference type="SUPFAM" id="SSF52540">
    <property type="entry name" value="P-loop containing nucleoside triphosphate hydrolases"/>
    <property type="match status" value="1"/>
</dbReference>
<dbReference type="PROSITE" id="PS51902">
    <property type="entry name" value="CLPX_ZB"/>
    <property type="match status" value="1"/>
</dbReference>